<comment type="function">
    <text evidence="1">Acts as a calcium-dependent, homophilic cell adhesion molecule that regulates neural recognition during the development of the nervous system. Component of the repulsive Plexin signaling response to regulate motor axon guidance at the embryonic stage. Also component of a receptor complex that is required in the adult visual system to innervate the lamina layer; specific targeting of R1-R6 axons (By similarity).</text>
</comment>
<comment type="subunit">
    <text evidence="1">Interacts with plexA; component of a receptor complex that mediates the repulsive signaling in response to Semaphorin ligands.</text>
</comment>
<comment type="subcellular location">
    <subcellularLocation>
        <location evidence="2">Cell membrane</location>
        <topology evidence="2">Single-pass type I membrane protein</topology>
    </subcellularLocation>
</comment>
<comment type="similarity">
    <text evidence="5">Belongs to the protein kinase superfamily. Tyr protein kinase family. Insulin receptor subfamily.</text>
</comment>
<comment type="caution">
    <text evidence="7">The D.melanogaster ortholog of this protein has been proposed to undergo autophosphorylation on tyrosine residues which is induced in response to cell adhesion (PubMed:1371458). However as mammalian orthologs of this protein seem to lack kinase activity it may be that this protein associates with, and is phosphorylated by, an unknown active tyrosine kinase.</text>
</comment>
<name>PTK7_DROPS</name>
<gene>
    <name evidence="2" type="primary">otk</name>
    <name type="ORF">GA21443</name>
</gene>
<evidence type="ECO:0000250" key="1"/>
<evidence type="ECO:0000250" key="2">
    <source>
        <dbReference type="UniProtKB" id="Q6AWJ9"/>
    </source>
</evidence>
<evidence type="ECO:0000255" key="3"/>
<evidence type="ECO:0000255" key="4">
    <source>
        <dbReference type="PROSITE-ProRule" id="PRU00114"/>
    </source>
</evidence>
<evidence type="ECO:0000255" key="5">
    <source>
        <dbReference type="PROSITE-ProRule" id="PRU00159"/>
    </source>
</evidence>
<evidence type="ECO:0000256" key="6">
    <source>
        <dbReference type="SAM" id="MobiDB-lite"/>
    </source>
</evidence>
<evidence type="ECO:0000305" key="7"/>
<evidence type="ECO:0000312" key="8">
    <source>
        <dbReference type="EMBL" id="EAL25327.2"/>
    </source>
</evidence>
<organism>
    <name type="scientific">Drosophila pseudoobscura pseudoobscura</name>
    <name type="common">Fruit fly</name>
    <dbReference type="NCBI Taxonomy" id="46245"/>
    <lineage>
        <taxon>Eukaryota</taxon>
        <taxon>Metazoa</taxon>
        <taxon>Ecdysozoa</taxon>
        <taxon>Arthropoda</taxon>
        <taxon>Hexapoda</taxon>
        <taxon>Insecta</taxon>
        <taxon>Pterygota</taxon>
        <taxon>Neoptera</taxon>
        <taxon>Endopterygota</taxon>
        <taxon>Diptera</taxon>
        <taxon>Brachycera</taxon>
        <taxon>Muscomorpha</taxon>
        <taxon>Ephydroidea</taxon>
        <taxon>Drosophilidae</taxon>
        <taxon>Drosophila</taxon>
        <taxon>Sophophora</taxon>
    </lineage>
</organism>
<protein>
    <recommendedName>
        <fullName evidence="2">Tyrosine-protein kinase-like otk</fullName>
    </recommendedName>
    <alternativeName>
        <fullName>Tyrosine-protein kinase-like 7 homolog</fullName>
    </alternativeName>
</protein>
<reference evidence="8" key="1">
    <citation type="journal article" date="2005" name="Genome Res.">
        <title>Comparative genome sequencing of Drosophila pseudoobscura: chromosomal, gene, and cis-element evolution.</title>
        <authorList>
            <person name="Richards S."/>
            <person name="Liu Y."/>
            <person name="Bettencourt B.R."/>
            <person name="Hradecky P."/>
            <person name="Letovsky S."/>
            <person name="Nielsen R."/>
            <person name="Thornton K."/>
            <person name="Hubisz M.J."/>
            <person name="Chen R."/>
            <person name="Meisel R.P."/>
            <person name="Couronne O."/>
            <person name="Hua S."/>
            <person name="Smith M.A."/>
            <person name="Zhang P."/>
            <person name="Liu J."/>
            <person name="Bussemaker H.J."/>
            <person name="van Batenburg M.F."/>
            <person name="Howells S.L."/>
            <person name="Scherer S.E."/>
            <person name="Sodergren E."/>
            <person name="Matthews B.B."/>
            <person name="Crosby M.A."/>
            <person name="Schroeder A.J."/>
            <person name="Ortiz-Barrientos D."/>
            <person name="Rives C.M."/>
            <person name="Metzker M.L."/>
            <person name="Muzny D.M."/>
            <person name="Scott G."/>
            <person name="Steffen D."/>
            <person name="Wheeler D.A."/>
            <person name="Worley K.C."/>
            <person name="Havlak P."/>
            <person name="Durbin K.J."/>
            <person name="Egan A."/>
            <person name="Gill R."/>
            <person name="Hume J."/>
            <person name="Morgan M.B."/>
            <person name="Miner G."/>
            <person name="Hamilton C."/>
            <person name="Huang Y."/>
            <person name="Waldron L."/>
            <person name="Verduzco D."/>
            <person name="Clerc-Blankenburg K.P."/>
            <person name="Dubchak I."/>
            <person name="Noor M.A.F."/>
            <person name="Anderson W."/>
            <person name="White K.P."/>
            <person name="Clark A.G."/>
            <person name="Schaeffer S.W."/>
            <person name="Gelbart W.M."/>
            <person name="Weinstock G.M."/>
            <person name="Gibbs R.A."/>
        </authorList>
    </citation>
    <scope>NUCLEOTIDE SEQUENCE [LARGE SCALE GENOMIC DNA]</scope>
    <source>
        <strain>MV2-25 / Tucson 14011-0121.94</strain>
    </source>
</reference>
<sequence length="1037" mass="113830">MDMDVMMISMCILASTFMAPGWASTSGFLRVPQSQSIVENEAADFGCEATDSASYLHYEWLHNGREIAYDKRVYRIGSHLHIEAVQREEDVGDYVCIATSLASGAREASPPAKLSVIYLESASVQLLGSNRNELLLKCHVEGASGDEPLQIEWYRDSARLASWGNVHLEEHRLLVRQPSPSDDGLYRCTASNAAGRVMSKQGYVYQANIKCLPRLLKKNQKLPESWGKQTFLCRGKRGGSGGLDQALSPAPEDLRIVQGPAGQLLIKEGDSAALSCLYELPAELQNQRIQLRWRKDGKLLRHVELGGALPIPGHAHDSGKDALLREDARLVLHKQNGTLSFASIIASDAGQYQCQLQLEGHAPLNSSPGLLEVIEQLKFVPQPTSKNLELDAAVAKVHCKAQGTPSPQVQWLREGSLNSSLPDQVEVDINGTLIFRNVRAEHRGNYTCQASSSQGQISATVSINVVVTPKFSVPPVGPIETTEQGSVVMHCQAIGDPKPTIQWDKDLKYLSENNTDRERFSFLENGTLEIRNVQVEDEGSYGCTIGNSAGLKREDVQLVVRSTGDGFAPEETGGDGFLVTRAVLITMTVALAYIVLVVGLMLWCRYRRQARKARLNELSIKEAGGDQPDASVTNGKGSEQEPCLSKQRNGASGKPKSKSNGDAQKSDDTACSQQSRSSKKSVYEQLVLPRSGLSELLQIGRGEFGDVFVGKLKASLVATSAQSDKDADTEKQHSNSENGSGGSGSGSGSGSTTLSTLNEKRRSKTSMDDIEEIKEEEPEQSALEQLVLVKALNKVKDEQACQEFRRQLDLLRGISHKGVVRLFGLCREKDPHYMVLEYTDWGDLKQFLLATAGKVNTATATSSPPALTTSQVLAVAYQIARGMDAIYRSRCTHRDLATRNCVISSEFVVKVSYPALCKDKYSREYHKHRNTLLPVRWLAPECIQEDEYTTKSDIFAYGVLVWELFNQATKLPHEELTSEQVIQRSQAGTLEWTVAEATPDSLKEILLSCWLANPKERPSFSQLGSALSKAMQSVAEK</sequence>
<accession>Q290N5</accession>
<proteinExistence type="inferred from homology"/>
<feature type="signal peptide" evidence="3">
    <location>
        <begin position="1"/>
        <end position="23"/>
    </location>
</feature>
<feature type="chain" id="PRO_0000388690" description="Tyrosine-protein kinase-like otk" evidence="3">
    <location>
        <begin position="24"/>
        <end position="1037"/>
    </location>
</feature>
<feature type="topological domain" description="Extracellular" evidence="3">
    <location>
        <begin position="24"/>
        <end position="582"/>
    </location>
</feature>
<feature type="transmembrane region" description="Helical" evidence="3">
    <location>
        <begin position="583"/>
        <end position="603"/>
    </location>
</feature>
<feature type="topological domain" description="Cytoplasmic" evidence="3">
    <location>
        <begin position="604"/>
        <end position="1037"/>
    </location>
</feature>
<feature type="domain" description="Ig-like C2-type 1" evidence="3">
    <location>
        <begin position="24"/>
        <end position="109"/>
    </location>
</feature>
<feature type="domain" description="Ig-like C2-type 2" evidence="3">
    <location>
        <begin position="110"/>
        <end position="199"/>
    </location>
</feature>
<feature type="domain" description="Ig-like C2-type 3" evidence="3">
    <location>
        <begin position="251"/>
        <end position="365"/>
    </location>
</feature>
<feature type="domain" description="Ig-like C2-type 4" evidence="3">
    <location>
        <begin position="368"/>
        <end position="464"/>
    </location>
</feature>
<feature type="domain" description="Ig-like C2-type 5" evidence="3">
    <location>
        <begin position="469"/>
        <end position="559"/>
    </location>
</feature>
<feature type="domain" description="Protein kinase; inactive" evidence="5 7">
    <location>
        <begin position="693"/>
        <end position="1031"/>
    </location>
</feature>
<feature type="region of interest" description="Disordered" evidence="6">
    <location>
        <begin position="623"/>
        <end position="683"/>
    </location>
</feature>
<feature type="region of interest" description="Disordered" evidence="6">
    <location>
        <begin position="720"/>
        <end position="777"/>
    </location>
</feature>
<feature type="compositionally biased region" description="Polar residues" evidence="6">
    <location>
        <begin position="658"/>
        <end position="676"/>
    </location>
</feature>
<feature type="compositionally biased region" description="Basic and acidic residues" evidence="6">
    <location>
        <begin position="723"/>
        <end position="734"/>
    </location>
</feature>
<feature type="compositionally biased region" description="Gly residues" evidence="6">
    <location>
        <begin position="739"/>
        <end position="749"/>
    </location>
</feature>
<feature type="compositionally biased region" description="Acidic residues" evidence="6">
    <location>
        <begin position="768"/>
        <end position="777"/>
    </location>
</feature>
<feature type="modified residue" description="Phosphoserine" evidence="2">
    <location>
        <position position="681"/>
    </location>
</feature>
<feature type="glycosylation site" description="N-linked (GlcNAc...) asparagine" evidence="3">
    <location>
        <position position="336"/>
    </location>
</feature>
<feature type="glycosylation site" description="N-linked (GlcNAc...) asparagine" evidence="3">
    <location>
        <position position="418"/>
    </location>
</feature>
<feature type="glycosylation site" description="N-linked (GlcNAc...) asparagine" evidence="3">
    <location>
        <position position="430"/>
    </location>
</feature>
<feature type="glycosylation site" description="N-linked (GlcNAc...) asparagine" evidence="3">
    <location>
        <position position="445"/>
    </location>
</feature>
<feature type="glycosylation site" description="N-linked (GlcNAc...) asparagine" evidence="3">
    <location>
        <position position="513"/>
    </location>
</feature>
<feature type="glycosylation site" description="N-linked (GlcNAc...) asparagine" evidence="3">
    <location>
        <position position="525"/>
    </location>
</feature>
<feature type="disulfide bond" evidence="4">
    <location>
        <begin position="47"/>
        <end position="96"/>
    </location>
</feature>
<feature type="disulfide bond" evidence="4">
    <location>
        <begin position="138"/>
        <end position="188"/>
    </location>
</feature>
<feature type="disulfide bond" evidence="4">
    <location>
        <begin position="276"/>
        <end position="354"/>
    </location>
</feature>
<feature type="disulfide bond" evidence="4">
    <location>
        <begin position="399"/>
        <end position="448"/>
    </location>
</feature>
<feature type="disulfide bond" evidence="4">
    <location>
        <begin position="491"/>
        <end position="543"/>
    </location>
</feature>
<keyword id="KW-0130">Cell adhesion</keyword>
<keyword id="KW-1003">Cell membrane</keyword>
<keyword id="KW-1015">Disulfide bond</keyword>
<keyword id="KW-0325">Glycoprotein</keyword>
<keyword id="KW-0393">Immunoglobulin domain</keyword>
<keyword id="KW-0472">Membrane</keyword>
<keyword id="KW-0524">Neurogenesis</keyword>
<keyword id="KW-0597">Phosphoprotein</keyword>
<keyword id="KW-0675">Receptor</keyword>
<keyword id="KW-1185">Reference proteome</keyword>
<keyword id="KW-0677">Repeat</keyword>
<keyword id="KW-0732">Signal</keyword>
<keyword id="KW-0812">Transmembrane</keyword>
<keyword id="KW-1133">Transmembrane helix</keyword>
<dbReference type="EMBL" id="CM000071">
    <property type="protein sequence ID" value="EAL25327.2"/>
    <property type="molecule type" value="Genomic_DNA"/>
</dbReference>
<dbReference type="RefSeq" id="XP_001360752.2">
    <property type="nucleotide sequence ID" value="XM_001360715.3"/>
</dbReference>
<dbReference type="SMR" id="Q290N5"/>
<dbReference type="FunCoup" id="Q290N5">
    <property type="interactions" value="271"/>
</dbReference>
<dbReference type="STRING" id="46245.Q290N5"/>
<dbReference type="GlyCosmos" id="Q290N5">
    <property type="glycosylation" value="6 sites, No reported glycans"/>
</dbReference>
<dbReference type="EnsemblMetazoa" id="FBtr0279309">
    <property type="protein sequence ID" value="FBpp0277747"/>
    <property type="gene ID" value="FBgn0081430"/>
</dbReference>
<dbReference type="GeneID" id="4804146"/>
<dbReference type="KEGG" id="dpo:4804146"/>
<dbReference type="CTD" id="36283"/>
<dbReference type="eggNOG" id="KOG1026">
    <property type="taxonomic scope" value="Eukaryota"/>
</dbReference>
<dbReference type="eggNOG" id="KOG4475">
    <property type="taxonomic scope" value="Eukaryota"/>
</dbReference>
<dbReference type="HOGENOM" id="CLU_012268_0_0_1"/>
<dbReference type="InParanoid" id="Q290N5"/>
<dbReference type="OMA" id="SHLHIEA"/>
<dbReference type="ChiTaRS" id="otk">
    <property type="organism name" value="fly"/>
</dbReference>
<dbReference type="Proteomes" id="UP000001819">
    <property type="component" value="Chromosome 3"/>
</dbReference>
<dbReference type="Bgee" id="FBgn0081430">
    <property type="expression patterns" value="Expressed in multicellular organism and 1 other cell type or tissue"/>
</dbReference>
<dbReference type="GO" id="GO:0005886">
    <property type="term" value="C:plasma membrane"/>
    <property type="evidence" value="ECO:0000250"/>
    <property type="project" value="UniProtKB"/>
</dbReference>
<dbReference type="GO" id="GO:0043235">
    <property type="term" value="C:receptor complex"/>
    <property type="evidence" value="ECO:0007669"/>
    <property type="project" value="TreeGrafter"/>
</dbReference>
<dbReference type="GO" id="GO:0005524">
    <property type="term" value="F:ATP binding"/>
    <property type="evidence" value="ECO:0007669"/>
    <property type="project" value="InterPro"/>
</dbReference>
<dbReference type="GO" id="GO:0050839">
    <property type="term" value="F:cell adhesion molecule binding"/>
    <property type="evidence" value="ECO:0000250"/>
    <property type="project" value="UniProtKB"/>
</dbReference>
<dbReference type="GO" id="GO:0004672">
    <property type="term" value="F:protein kinase activity"/>
    <property type="evidence" value="ECO:0000250"/>
    <property type="project" value="UniProtKB"/>
</dbReference>
<dbReference type="GO" id="GO:0038023">
    <property type="term" value="F:signaling receptor activity"/>
    <property type="evidence" value="ECO:0000250"/>
    <property type="project" value="UniProtKB"/>
</dbReference>
<dbReference type="GO" id="GO:0004714">
    <property type="term" value="F:transmembrane receptor protein tyrosine kinase activity"/>
    <property type="evidence" value="ECO:0007669"/>
    <property type="project" value="TreeGrafter"/>
</dbReference>
<dbReference type="GO" id="GO:0048513">
    <property type="term" value="P:animal organ development"/>
    <property type="evidence" value="ECO:0007669"/>
    <property type="project" value="UniProtKB-ARBA"/>
</dbReference>
<dbReference type="GO" id="GO:0007155">
    <property type="term" value="P:cell adhesion"/>
    <property type="evidence" value="ECO:0000250"/>
    <property type="project" value="UniProtKB"/>
</dbReference>
<dbReference type="GO" id="GO:0007169">
    <property type="term" value="P:cell surface receptor protein tyrosine kinase signaling pathway"/>
    <property type="evidence" value="ECO:0007669"/>
    <property type="project" value="TreeGrafter"/>
</dbReference>
<dbReference type="GO" id="GO:0010976">
    <property type="term" value="P:positive regulation of neuron projection development"/>
    <property type="evidence" value="ECO:0007669"/>
    <property type="project" value="TreeGrafter"/>
</dbReference>
<dbReference type="GO" id="GO:0051897">
    <property type="term" value="P:positive regulation of phosphatidylinositol 3-kinase/protein kinase B signal transduction"/>
    <property type="evidence" value="ECO:0007669"/>
    <property type="project" value="TreeGrafter"/>
</dbReference>
<dbReference type="GO" id="GO:0031290">
    <property type="term" value="P:retinal ganglion cell axon guidance"/>
    <property type="evidence" value="ECO:0000250"/>
    <property type="project" value="UniProtKB"/>
</dbReference>
<dbReference type="CDD" id="cd00096">
    <property type="entry name" value="Ig"/>
    <property type="match status" value="2"/>
</dbReference>
<dbReference type="FunFam" id="1.10.510.10:FF:000954">
    <property type="entry name" value="Tyrosine-protein kinase-like otk"/>
    <property type="match status" value="1"/>
</dbReference>
<dbReference type="FunFam" id="2.60.40.10:FF:001805">
    <property type="entry name" value="Tyrosine-protein kinase-like otk"/>
    <property type="match status" value="1"/>
</dbReference>
<dbReference type="FunFam" id="2.60.40.10:FF:002027">
    <property type="entry name" value="Tyrosine-protein kinase-like otk"/>
    <property type="match status" value="1"/>
</dbReference>
<dbReference type="FunFam" id="2.60.40.10:FF:002086">
    <property type="entry name" value="Tyrosine-protein kinase-like otk"/>
    <property type="match status" value="1"/>
</dbReference>
<dbReference type="FunFam" id="2.60.40.10:FF:002809">
    <property type="entry name" value="Tyrosine-protein kinase-like otk"/>
    <property type="match status" value="1"/>
</dbReference>
<dbReference type="FunFam" id="3.30.200.20:FF:001776">
    <property type="entry name" value="Tyrosine-protein kinase-like otk"/>
    <property type="match status" value="1"/>
</dbReference>
<dbReference type="FunFam" id="2.60.40.10:FF:002127">
    <property type="entry name" value="tyrosine-protein kinase-like otk"/>
    <property type="match status" value="1"/>
</dbReference>
<dbReference type="Gene3D" id="2.60.40.10">
    <property type="entry name" value="Immunoglobulins"/>
    <property type="match status" value="5"/>
</dbReference>
<dbReference type="Gene3D" id="1.10.510.10">
    <property type="entry name" value="Transferase(Phosphotransferase) domain 1"/>
    <property type="match status" value="1"/>
</dbReference>
<dbReference type="InterPro" id="IPR007110">
    <property type="entry name" value="Ig-like_dom"/>
</dbReference>
<dbReference type="InterPro" id="IPR036179">
    <property type="entry name" value="Ig-like_dom_sf"/>
</dbReference>
<dbReference type="InterPro" id="IPR013783">
    <property type="entry name" value="Ig-like_fold"/>
</dbReference>
<dbReference type="InterPro" id="IPR013098">
    <property type="entry name" value="Ig_I-set"/>
</dbReference>
<dbReference type="InterPro" id="IPR003599">
    <property type="entry name" value="Ig_sub"/>
</dbReference>
<dbReference type="InterPro" id="IPR003598">
    <property type="entry name" value="Ig_sub2"/>
</dbReference>
<dbReference type="InterPro" id="IPR013106">
    <property type="entry name" value="Ig_V-set"/>
</dbReference>
<dbReference type="InterPro" id="IPR011009">
    <property type="entry name" value="Kinase-like_dom_sf"/>
</dbReference>
<dbReference type="InterPro" id="IPR000719">
    <property type="entry name" value="Prot_kinase_dom"/>
</dbReference>
<dbReference type="InterPro" id="IPR050122">
    <property type="entry name" value="RTK"/>
</dbReference>
<dbReference type="InterPro" id="IPR001245">
    <property type="entry name" value="Ser-Thr/Tyr_kinase_cat_dom"/>
</dbReference>
<dbReference type="InterPro" id="IPR008266">
    <property type="entry name" value="Tyr_kinase_AS"/>
</dbReference>
<dbReference type="InterPro" id="IPR020635">
    <property type="entry name" value="Tyr_kinase_cat_dom"/>
</dbReference>
<dbReference type="PANTHER" id="PTHR24416">
    <property type="entry name" value="TYROSINE-PROTEIN KINASE RECEPTOR"/>
    <property type="match status" value="1"/>
</dbReference>
<dbReference type="PANTHER" id="PTHR24416:SF349">
    <property type="entry name" value="TYROSINE-PROTEIN KINASE RYK"/>
    <property type="match status" value="1"/>
</dbReference>
<dbReference type="Pfam" id="PF07679">
    <property type="entry name" value="I-set"/>
    <property type="match status" value="2"/>
</dbReference>
<dbReference type="Pfam" id="PF13927">
    <property type="entry name" value="Ig_3"/>
    <property type="match status" value="2"/>
</dbReference>
<dbReference type="Pfam" id="PF07714">
    <property type="entry name" value="PK_Tyr_Ser-Thr"/>
    <property type="match status" value="1"/>
</dbReference>
<dbReference type="PIRSF" id="PIRSF000615">
    <property type="entry name" value="TyrPK_CSF1-R"/>
    <property type="match status" value="1"/>
</dbReference>
<dbReference type="PRINTS" id="PR00109">
    <property type="entry name" value="TYRKINASE"/>
</dbReference>
<dbReference type="SMART" id="SM00409">
    <property type="entry name" value="IG"/>
    <property type="match status" value="5"/>
</dbReference>
<dbReference type="SMART" id="SM00408">
    <property type="entry name" value="IGc2"/>
    <property type="match status" value="5"/>
</dbReference>
<dbReference type="SMART" id="SM00406">
    <property type="entry name" value="IGv"/>
    <property type="match status" value="3"/>
</dbReference>
<dbReference type="SMART" id="SM00219">
    <property type="entry name" value="TyrKc"/>
    <property type="match status" value="1"/>
</dbReference>
<dbReference type="SUPFAM" id="SSF48726">
    <property type="entry name" value="Immunoglobulin"/>
    <property type="match status" value="4"/>
</dbReference>
<dbReference type="SUPFAM" id="SSF56112">
    <property type="entry name" value="Protein kinase-like (PK-like)"/>
    <property type="match status" value="1"/>
</dbReference>
<dbReference type="PROSITE" id="PS50835">
    <property type="entry name" value="IG_LIKE"/>
    <property type="match status" value="5"/>
</dbReference>
<dbReference type="PROSITE" id="PS50011">
    <property type="entry name" value="PROTEIN_KINASE_DOM"/>
    <property type="match status" value="1"/>
</dbReference>
<dbReference type="PROSITE" id="PS00109">
    <property type="entry name" value="PROTEIN_KINASE_TYR"/>
    <property type="match status" value="1"/>
</dbReference>